<accession>P06419</accession>
<proteinExistence type="inferred from homology"/>
<comment type="function">
    <text evidence="1">Minor protein of the capsid that localizes along the inner surface of the virion, within the central cavities beneath the L1 pentamers. Plays a role in capsid stabilization through interaction with the major capsid protein L1. Once the virion enters the host cell, L2 escorts the genomic DNA into the nucleus by promoting escape from the endosomal compartments and traffic through the host Golgi network. Mechanistically, the C-terminus of L2 possesses a cell-penetrating peptide that protudes from the host endosome, interacts with host cytoplasmic retromer cargo and thereby mediates the capsid delivery to the host trans-Golgi network. Plays a role through its interaction with host dynein in the intracellular microtubule-dependent transport of viral capsid toward the nucleus. Mediates the viral genome import into the nucleus through binding to host importins. Once within the nucleus, L2 localizes viral genomes to host PML bodies in order to activate early gene expression for establishment of infection. Later on, promotes late gene expression by interacting with the viral E2 protein and by inhibiting its transcriptional activation functions. During virion assembly, encapsidates the genome by direct interaction with the viral DNA.</text>
</comment>
<comment type="subunit">
    <text evidence="1">Interacts with major capsid protein L1. Interacts with E2; this interaction inhibits E2 transcriptional activity but not the DNA replication function E2. Interacts with host GADD45GIP1. Interacts with host HSPA8; this interaction is required for L2 nuclear translocation. Interacts with host importins KPNB2 and KPNB3. Forms a complex with importin alpha2-beta1 heterodimers via interaction with the importin alpha2 adapter. Interacts with host DYNLT1; this interaction is essential for virus intracellular transport during entry. Interacts (via C-terminus) with host retromer subunits VPS35 and VPS29.</text>
</comment>
<comment type="subcellular location">
    <subcellularLocation>
        <location evidence="1">Virion</location>
    </subcellularLocation>
    <subcellularLocation>
        <location evidence="1">Host nucleus</location>
    </subcellularLocation>
    <subcellularLocation>
        <location evidence="1">Host early endosome</location>
    </subcellularLocation>
    <subcellularLocation>
        <location evidence="1">Host Golgi apparatus</location>
    </subcellularLocation>
</comment>
<comment type="PTM">
    <text evidence="1">Highly phosphorylated.</text>
</comment>
<comment type="similarity">
    <text evidence="1">Belongs to the papillomaviridae L2 protein family.</text>
</comment>
<organismHost>
    <name type="scientific">Homo sapiens</name>
    <name type="common">Human</name>
    <dbReference type="NCBI Taxonomy" id="9606"/>
</organismHost>
<feature type="chain" id="PRO_0000133575" description="Minor capsid protein L2">
    <location>
        <begin position="1"/>
        <end position="518"/>
    </location>
</feature>
<feature type="short sequence motif" description="Nuclear localization signal" evidence="1">
    <location>
        <begin position="1"/>
        <end position="10"/>
    </location>
</feature>
<feature type="short sequence motif" description="Nuclear localization signal" evidence="1">
    <location>
        <begin position="510"/>
        <end position="517"/>
    </location>
</feature>
<feature type="disulfide bond" evidence="1">
    <location>
        <begin position="19"/>
        <end position="25"/>
    </location>
</feature>
<keyword id="KW-0167">Capsid protein</keyword>
<keyword id="KW-1176">Cytoplasmic inwards viral transport</keyword>
<keyword id="KW-1015">Disulfide bond</keyword>
<keyword id="KW-0238">DNA-binding</keyword>
<keyword id="KW-1039">Host endosome</keyword>
<keyword id="KW-1040">Host Golgi apparatus</keyword>
<keyword id="KW-1048">Host nucleus</keyword>
<keyword id="KW-0945">Host-virus interaction</keyword>
<keyword id="KW-0426">Late protein</keyword>
<keyword id="KW-1177">Microtubular inwards viral transport</keyword>
<keyword id="KW-0597">Phosphoprotein</keyword>
<keyword id="KW-1163">Viral penetration into host nucleus</keyword>
<keyword id="KW-0946">Virion</keyword>
<keyword id="KW-1160">Virus entry into host cell</keyword>
<organism>
    <name type="scientific">Human papillomavirus type 8</name>
    <dbReference type="NCBI Taxonomy" id="10579"/>
    <lineage>
        <taxon>Viruses</taxon>
        <taxon>Monodnaviria</taxon>
        <taxon>Shotokuvirae</taxon>
        <taxon>Cossaviricota</taxon>
        <taxon>Papovaviricetes</taxon>
        <taxon>Zurhausenvirales</taxon>
        <taxon>Papillomaviridae</taxon>
        <taxon>Firstpapillomavirinae</taxon>
        <taxon>Betapapillomavirus</taxon>
        <taxon>Betapapillomavirus 1</taxon>
    </lineage>
</organism>
<name>VL2_HPV08</name>
<gene>
    <name evidence="1" type="primary">L2</name>
</gene>
<protein>
    <recommendedName>
        <fullName evidence="1">Minor capsid protein L2</fullName>
    </recommendedName>
</protein>
<reference key="1">
    <citation type="journal article" date="1986" name="J. Virol.">
        <title>Epidermodysplasia verruciformis-associated human papillomavirus 8: genomic sequence and comparative analysis.</title>
        <authorList>
            <person name="Fuchs P.G."/>
            <person name="Iftner T."/>
            <person name="Weninger J."/>
            <person name="Pfister H."/>
        </authorList>
    </citation>
    <scope>NUCLEOTIDE SEQUENCE [GENOMIC DNA]</scope>
</reference>
<evidence type="ECO:0000255" key="1">
    <source>
        <dbReference type="HAMAP-Rule" id="MF_04003"/>
    </source>
</evidence>
<dbReference type="EMBL" id="M12737">
    <property type="status" value="NOT_ANNOTATED_CDS"/>
    <property type="molecule type" value="Genomic_DNA"/>
</dbReference>
<dbReference type="PIR" id="A03651">
    <property type="entry name" value="P2WL8"/>
</dbReference>
<dbReference type="Proteomes" id="UP000009103">
    <property type="component" value="Segment"/>
</dbReference>
<dbReference type="GO" id="GO:0043657">
    <property type="term" value="C:host cell"/>
    <property type="evidence" value="ECO:0007669"/>
    <property type="project" value="GOC"/>
</dbReference>
<dbReference type="GO" id="GO:0044174">
    <property type="term" value="C:host cell endosome"/>
    <property type="evidence" value="ECO:0007669"/>
    <property type="project" value="UniProtKB-KW"/>
</dbReference>
<dbReference type="GO" id="GO:0044177">
    <property type="term" value="C:host cell Golgi apparatus"/>
    <property type="evidence" value="ECO:0007669"/>
    <property type="project" value="UniProtKB-SubCell"/>
</dbReference>
<dbReference type="GO" id="GO:0042025">
    <property type="term" value="C:host cell nucleus"/>
    <property type="evidence" value="ECO:0007669"/>
    <property type="project" value="UniProtKB-SubCell"/>
</dbReference>
<dbReference type="GO" id="GO:0019028">
    <property type="term" value="C:viral capsid"/>
    <property type="evidence" value="ECO:0007669"/>
    <property type="project" value="UniProtKB-UniRule"/>
</dbReference>
<dbReference type="GO" id="GO:0003677">
    <property type="term" value="F:DNA binding"/>
    <property type="evidence" value="ECO:0007669"/>
    <property type="project" value="UniProtKB-UniRule"/>
</dbReference>
<dbReference type="GO" id="GO:0005198">
    <property type="term" value="F:structural molecule activity"/>
    <property type="evidence" value="ECO:0007669"/>
    <property type="project" value="UniProtKB-UniRule"/>
</dbReference>
<dbReference type="GO" id="GO:0075521">
    <property type="term" value="P:microtubule-dependent intracellular transport of viral material towards nucleus"/>
    <property type="evidence" value="ECO:0007669"/>
    <property type="project" value="UniProtKB-UniRule"/>
</dbReference>
<dbReference type="GO" id="GO:0046718">
    <property type="term" value="P:symbiont entry into host cell"/>
    <property type="evidence" value="ECO:0007669"/>
    <property type="project" value="UniProtKB-KW"/>
</dbReference>
<dbReference type="GO" id="GO:0075732">
    <property type="term" value="P:viral penetration into host nucleus"/>
    <property type="evidence" value="ECO:0007669"/>
    <property type="project" value="UniProtKB-KW"/>
</dbReference>
<dbReference type="HAMAP" id="MF_04003">
    <property type="entry name" value="PPV_L2"/>
    <property type="match status" value="1"/>
</dbReference>
<dbReference type="InterPro" id="IPR000784">
    <property type="entry name" value="Late_L2"/>
</dbReference>
<dbReference type="Pfam" id="PF00513">
    <property type="entry name" value="Late_protein_L2"/>
    <property type="match status" value="1"/>
</dbReference>
<sequence length="518" mass="56795">MARARRVKRDSVTHIYQTCKQAGTCPPDVINKVEQTTVADNILKYGSAGVFFGGLGIGTGRGTGGVTGYTPLSEGPGIRVGNTPTVVRPSLVPEAVGPMDILPIDTIDPVEPSVSSVVPLTESSGADLLPGEVETIAEIHPVPEGPTIDSPVVTTSKGSSAILEVAPEPTPPTRVRVSRTQYHNPSFQIITDSTPTQGESSLADHILVTSGSGGQTIGSDITDVIELQEFPSRYSFEIDEPTPPRQSSTPIERPQVVGRRRGISLTNRRLIQQVAVEDPLFLSKPSKLVRFSFDNPVFEEEVTNIFEQDVDMVEEPPDRDFLDVRQLGRPQYSTTPAGYVRVSRLGTRGTIRTRSGAQIGSQVHFYRDLSSINTEDPIELQLLGQHSGDSTIVQGPVESTFVNVDISENPLSESIQAFSDDLLLDETVEDFSGSQLVIGNRRSTTSYTVPRFETTRSGSYYVQDTKGYYVAYPESRNNEEIIYPTPDLPVVIIHTHDNSGDFFLHPSLRRRKRKRKYL</sequence>